<sequence length="510" mass="56981">MIWHVQNENFILDSTRIFMKAFHLLLFQGSFIFPECILIFGLILLLMIDLTSDQKDRPWFYFISSTSLVISITALLFRWREEPIISFSGNFQTNNFNEIFQFLILLCSTLCIPLSVEYIECTEMAITEFLLFVLTATLGGMFLCGANDLITIFVALECFSLCSYLLSGYTKRDLRSNEATMKYLLMGGASSSILVYGFSWLYGLSGGEIELQEIVNGLINTQMYNSPGISIALIFITVGLGFKLSLAPFHQWTPDVYEGSPTPVVAFLSVTSKVAALALATRILDIPFYFSSNEWHLLLEILAILSMILGNLLAITQTSMKRMLAYSSIGQIGYVIIGIIVGDSNDGYASMITYMLFYISMNLGTFACIVLFGLRTGTDNIRDYAGLYTKDPFLALSLALCLLSLGGLPPLAGFFGKLYLFWCGWQAGLYFLVSIGLLTSVLSIYYYLKIVKLLMTGRNQEITPYVRNYRRSPLRSNNSIELSMTVCVIASTILGISMNPILAIAQDTLF</sequence>
<feature type="chain" id="PRO_0000288691" description="NAD(P)H-quinone oxidoreductase subunit 2 A, chloroplastic">
    <location>
        <begin position="1"/>
        <end position="510"/>
    </location>
</feature>
<feature type="transmembrane region" description="Helical" evidence="2">
    <location>
        <begin position="31"/>
        <end position="51"/>
    </location>
</feature>
<feature type="transmembrane region" description="Helical" evidence="2">
    <location>
        <begin position="59"/>
        <end position="79"/>
    </location>
</feature>
<feature type="transmembrane region" description="Helical" evidence="2">
    <location>
        <begin position="99"/>
        <end position="119"/>
    </location>
</feature>
<feature type="transmembrane region" description="Helical" evidence="2">
    <location>
        <begin position="124"/>
        <end position="144"/>
    </location>
</feature>
<feature type="transmembrane region" description="Helical" evidence="2">
    <location>
        <begin position="149"/>
        <end position="169"/>
    </location>
</feature>
<feature type="transmembrane region" description="Helical" evidence="2">
    <location>
        <begin position="184"/>
        <end position="204"/>
    </location>
</feature>
<feature type="transmembrane region" description="Helical" evidence="2">
    <location>
        <begin position="229"/>
        <end position="249"/>
    </location>
</feature>
<feature type="transmembrane region" description="Helical" evidence="2">
    <location>
        <begin position="261"/>
        <end position="281"/>
    </location>
</feature>
<feature type="transmembrane region" description="Helical" evidence="2">
    <location>
        <begin position="295"/>
        <end position="315"/>
    </location>
</feature>
<feature type="transmembrane region" description="Helical" evidence="2">
    <location>
        <begin position="323"/>
        <end position="343"/>
    </location>
</feature>
<feature type="transmembrane region" description="Helical" evidence="2">
    <location>
        <begin position="354"/>
        <end position="374"/>
    </location>
</feature>
<feature type="transmembrane region" description="Helical" evidence="2">
    <location>
        <begin position="395"/>
        <end position="415"/>
    </location>
</feature>
<feature type="transmembrane region" description="Helical" evidence="2">
    <location>
        <begin position="418"/>
        <end position="438"/>
    </location>
</feature>
<feature type="transmembrane region" description="Helical" evidence="2">
    <location>
        <begin position="484"/>
        <end position="504"/>
    </location>
</feature>
<organism>
    <name type="scientific">Oryza sativa subsp. indica</name>
    <name type="common">Rice</name>
    <dbReference type="NCBI Taxonomy" id="39946"/>
    <lineage>
        <taxon>Eukaryota</taxon>
        <taxon>Viridiplantae</taxon>
        <taxon>Streptophyta</taxon>
        <taxon>Embryophyta</taxon>
        <taxon>Tracheophyta</taxon>
        <taxon>Spermatophyta</taxon>
        <taxon>Magnoliopsida</taxon>
        <taxon>Liliopsida</taxon>
        <taxon>Poales</taxon>
        <taxon>Poaceae</taxon>
        <taxon>BOP clade</taxon>
        <taxon>Oryzoideae</taxon>
        <taxon>Oryzeae</taxon>
        <taxon>Oryzinae</taxon>
        <taxon>Oryza</taxon>
        <taxon>Oryza sativa</taxon>
    </lineage>
</organism>
<geneLocation type="chloroplast"/>
<evidence type="ECO:0000250" key="1"/>
<evidence type="ECO:0000255" key="2">
    <source>
        <dbReference type="HAMAP-Rule" id="MF_00445"/>
    </source>
</evidence>
<keyword id="KW-0150">Chloroplast</keyword>
<keyword id="KW-0472">Membrane</keyword>
<keyword id="KW-0520">NAD</keyword>
<keyword id="KW-0521">NADP</keyword>
<keyword id="KW-0934">Plastid</keyword>
<keyword id="KW-0618">Plastoquinone</keyword>
<keyword id="KW-0874">Quinone</keyword>
<keyword id="KW-1185">Reference proteome</keyword>
<keyword id="KW-0691">RNA editing</keyword>
<keyword id="KW-0793">Thylakoid</keyword>
<keyword id="KW-1278">Translocase</keyword>
<keyword id="KW-0812">Transmembrane</keyword>
<keyword id="KW-1133">Transmembrane helix</keyword>
<keyword id="KW-0813">Transport</keyword>
<comment type="function">
    <text evidence="2">NDH shuttles electrons from NAD(P)H:plastoquinone, via FMN and iron-sulfur (Fe-S) centers, to quinones in the photosynthetic chain and possibly in a chloroplast respiratory chain. The immediate electron acceptor for the enzyme in this species is believed to be plastoquinone. Couples the redox reaction to proton translocation, and thus conserves the redox energy in a proton gradient.</text>
</comment>
<comment type="catalytic activity">
    <reaction evidence="2">
        <text>a plastoquinone + NADH + (n+1) H(+)(in) = a plastoquinol + NAD(+) + n H(+)(out)</text>
        <dbReference type="Rhea" id="RHEA:42608"/>
        <dbReference type="Rhea" id="RHEA-COMP:9561"/>
        <dbReference type="Rhea" id="RHEA-COMP:9562"/>
        <dbReference type="ChEBI" id="CHEBI:15378"/>
        <dbReference type="ChEBI" id="CHEBI:17757"/>
        <dbReference type="ChEBI" id="CHEBI:57540"/>
        <dbReference type="ChEBI" id="CHEBI:57945"/>
        <dbReference type="ChEBI" id="CHEBI:62192"/>
    </reaction>
</comment>
<comment type="catalytic activity">
    <reaction evidence="2">
        <text>a plastoquinone + NADPH + (n+1) H(+)(in) = a plastoquinol + NADP(+) + n H(+)(out)</text>
        <dbReference type="Rhea" id="RHEA:42612"/>
        <dbReference type="Rhea" id="RHEA-COMP:9561"/>
        <dbReference type="Rhea" id="RHEA-COMP:9562"/>
        <dbReference type="ChEBI" id="CHEBI:15378"/>
        <dbReference type="ChEBI" id="CHEBI:17757"/>
        <dbReference type="ChEBI" id="CHEBI:57783"/>
        <dbReference type="ChEBI" id="CHEBI:58349"/>
        <dbReference type="ChEBI" id="CHEBI:62192"/>
    </reaction>
</comment>
<comment type="subunit">
    <text evidence="2">NDH is composed of at least 16 different subunits, 5 of which are encoded in the nucleus.</text>
</comment>
<comment type="subcellular location">
    <subcellularLocation>
        <location evidence="2">Plastid</location>
        <location evidence="2">Chloroplast thylakoid membrane</location>
        <topology evidence="2">Multi-pass membrane protein</topology>
    </subcellularLocation>
</comment>
<comment type="RNA editing">
    <location>
        <position position="156" evidence="1"/>
    </location>
    <location>
        <position position="196" evidence="1"/>
    </location>
    <location>
        <position position="204" evidence="1"/>
    </location>
    <location>
        <position position="235" evidence="1"/>
    </location>
    <location>
        <position position="246" evidence="1"/>
    </location>
    <location>
        <position position="277" evidence="1"/>
    </location>
    <location>
        <position position="279" evidence="1"/>
    </location>
    <location>
        <position position="494" evidence="1"/>
    </location>
</comment>
<comment type="similarity">
    <text evidence="2">Belongs to the complex I subunit 2 family.</text>
</comment>
<accession>P0CD20</accession>
<accession>P0C347</accession>
<gene>
    <name evidence="2" type="primary">ndhB1</name>
</gene>
<protein>
    <recommendedName>
        <fullName evidence="2">NAD(P)H-quinone oxidoreductase subunit 2 A, chloroplastic</fullName>
        <ecNumber evidence="2">7.1.1.-</ecNumber>
    </recommendedName>
    <alternativeName>
        <fullName evidence="2">NAD(P)H dehydrogenase, subunit 2 A</fullName>
    </alternativeName>
    <alternativeName>
        <fullName evidence="2">NADH-plastoquinone oxidoreductase subunit 2 A</fullName>
    </alternativeName>
</protein>
<name>NU2C1_ORYSI</name>
<dbReference type="EC" id="7.1.1.-" evidence="2"/>
<dbReference type="EMBL" id="AY522329">
    <property type="status" value="NOT_ANNOTATED_CDS"/>
    <property type="molecule type" value="Genomic_DNA"/>
</dbReference>
<dbReference type="SMR" id="P0CD20"/>
<dbReference type="STRING" id="39946.P0CD20"/>
<dbReference type="Proteomes" id="UP000007015">
    <property type="component" value="Chloroplast"/>
</dbReference>
<dbReference type="GO" id="GO:0009535">
    <property type="term" value="C:chloroplast thylakoid membrane"/>
    <property type="evidence" value="ECO:0007669"/>
    <property type="project" value="UniProtKB-SubCell"/>
</dbReference>
<dbReference type="GO" id="GO:0008137">
    <property type="term" value="F:NADH dehydrogenase (ubiquinone) activity"/>
    <property type="evidence" value="ECO:0007669"/>
    <property type="project" value="InterPro"/>
</dbReference>
<dbReference type="GO" id="GO:0048038">
    <property type="term" value="F:quinone binding"/>
    <property type="evidence" value="ECO:0007669"/>
    <property type="project" value="UniProtKB-KW"/>
</dbReference>
<dbReference type="GO" id="GO:0042773">
    <property type="term" value="P:ATP synthesis coupled electron transport"/>
    <property type="evidence" value="ECO:0007669"/>
    <property type="project" value="InterPro"/>
</dbReference>
<dbReference type="GO" id="GO:0019684">
    <property type="term" value="P:photosynthesis, light reaction"/>
    <property type="evidence" value="ECO:0007669"/>
    <property type="project" value="UniProtKB-UniRule"/>
</dbReference>
<dbReference type="HAMAP" id="MF_00445">
    <property type="entry name" value="NDH1_NuoN_1"/>
    <property type="match status" value="1"/>
</dbReference>
<dbReference type="InterPro" id="IPR010096">
    <property type="entry name" value="NADH-Q_OxRdtase_suN/2"/>
</dbReference>
<dbReference type="InterPro" id="IPR001750">
    <property type="entry name" value="ND/Mrp_TM"/>
</dbReference>
<dbReference type="InterPro" id="IPR045693">
    <property type="entry name" value="Ndh2_N"/>
</dbReference>
<dbReference type="NCBIfam" id="TIGR01770">
    <property type="entry name" value="NDH_I_N"/>
    <property type="match status" value="1"/>
</dbReference>
<dbReference type="NCBIfam" id="NF002701">
    <property type="entry name" value="PRK02504.1"/>
    <property type="match status" value="1"/>
</dbReference>
<dbReference type="PANTHER" id="PTHR22773">
    <property type="entry name" value="NADH DEHYDROGENASE"/>
    <property type="match status" value="1"/>
</dbReference>
<dbReference type="Pfam" id="PF19530">
    <property type="entry name" value="Ndh2_N"/>
    <property type="match status" value="1"/>
</dbReference>
<dbReference type="Pfam" id="PF00361">
    <property type="entry name" value="Proton_antipo_M"/>
    <property type="match status" value="1"/>
</dbReference>
<dbReference type="PRINTS" id="PR01434">
    <property type="entry name" value="NADHDHGNASE5"/>
</dbReference>
<reference key="1">
    <citation type="journal article" date="2004" name="Plant Physiol.">
        <title>A comparison of rice chloroplast genomes.</title>
        <authorList>
            <person name="Tang J."/>
            <person name="Xia H."/>
            <person name="Cao M."/>
            <person name="Zhang X."/>
            <person name="Zeng W."/>
            <person name="Hu S."/>
            <person name="Tong W."/>
            <person name="Wang J."/>
            <person name="Wang J."/>
            <person name="Yu J."/>
            <person name="Yang H."/>
            <person name="Zhu L."/>
        </authorList>
    </citation>
    <scope>NUCLEOTIDE SEQUENCE [LARGE SCALE GENOMIC DNA]</scope>
    <source>
        <strain>cv. 93-11</strain>
    </source>
</reference>
<proteinExistence type="inferred from homology"/>